<dbReference type="EC" id="2.5.1.141" evidence="1"/>
<dbReference type="EMBL" id="CP000438">
    <property type="protein sequence ID" value="ABJ10509.1"/>
    <property type="molecule type" value="Genomic_DNA"/>
</dbReference>
<dbReference type="SMR" id="Q02JG2"/>
<dbReference type="KEGG" id="pau:PA14_47150"/>
<dbReference type="PseudoCAP" id="PA14_47150"/>
<dbReference type="HOGENOM" id="CLU_029631_0_0_6"/>
<dbReference type="BioCyc" id="PAER208963:G1G74-3962-MONOMER"/>
<dbReference type="UniPathway" id="UPA00834">
    <property type="reaction ID" value="UER00712"/>
</dbReference>
<dbReference type="Proteomes" id="UP000000653">
    <property type="component" value="Chromosome"/>
</dbReference>
<dbReference type="GO" id="GO:0005886">
    <property type="term" value="C:plasma membrane"/>
    <property type="evidence" value="ECO:0007669"/>
    <property type="project" value="UniProtKB-SubCell"/>
</dbReference>
<dbReference type="GO" id="GO:0008495">
    <property type="term" value="F:protoheme IX farnesyltransferase activity"/>
    <property type="evidence" value="ECO:0007669"/>
    <property type="project" value="UniProtKB-UniRule"/>
</dbReference>
<dbReference type="GO" id="GO:0048034">
    <property type="term" value="P:heme O biosynthetic process"/>
    <property type="evidence" value="ECO:0007669"/>
    <property type="project" value="UniProtKB-UniRule"/>
</dbReference>
<dbReference type="CDD" id="cd13957">
    <property type="entry name" value="PT_UbiA_Cox10"/>
    <property type="match status" value="1"/>
</dbReference>
<dbReference type="FunFam" id="1.10.357.140:FF:000001">
    <property type="entry name" value="Protoheme IX farnesyltransferase"/>
    <property type="match status" value="1"/>
</dbReference>
<dbReference type="Gene3D" id="1.10.357.140">
    <property type="entry name" value="UbiA prenyltransferase"/>
    <property type="match status" value="1"/>
</dbReference>
<dbReference type="HAMAP" id="MF_00154">
    <property type="entry name" value="CyoE_CtaB"/>
    <property type="match status" value="1"/>
</dbReference>
<dbReference type="InterPro" id="IPR006369">
    <property type="entry name" value="Protohaem_IX_farnesylTrfase"/>
</dbReference>
<dbReference type="InterPro" id="IPR000537">
    <property type="entry name" value="UbiA_prenyltransferase"/>
</dbReference>
<dbReference type="InterPro" id="IPR030470">
    <property type="entry name" value="UbiA_prenylTrfase_CS"/>
</dbReference>
<dbReference type="InterPro" id="IPR044878">
    <property type="entry name" value="UbiA_sf"/>
</dbReference>
<dbReference type="NCBIfam" id="TIGR01473">
    <property type="entry name" value="cyoE_ctaB"/>
    <property type="match status" value="1"/>
</dbReference>
<dbReference type="NCBIfam" id="NF003348">
    <property type="entry name" value="PRK04375.1-1"/>
    <property type="match status" value="1"/>
</dbReference>
<dbReference type="PANTHER" id="PTHR43448">
    <property type="entry name" value="PROTOHEME IX FARNESYLTRANSFERASE, MITOCHONDRIAL"/>
    <property type="match status" value="1"/>
</dbReference>
<dbReference type="PANTHER" id="PTHR43448:SF2">
    <property type="entry name" value="PROTOHEME IX FARNESYLTRANSFERASE, MITOCHONDRIAL"/>
    <property type="match status" value="1"/>
</dbReference>
<dbReference type="Pfam" id="PF01040">
    <property type="entry name" value="UbiA"/>
    <property type="match status" value="1"/>
</dbReference>
<dbReference type="PROSITE" id="PS00943">
    <property type="entry name" value="UBIA"/>
    <property type="match status" value="1"/>
</dbReference>
<reference key="1">
    <citation type="journal article" date="2006" name="Genome Biol.">
        <title>Genomic analysis reveals that Pseudomonas aeruginosa virulence is combinatorial.</title>
        <authorList>
            <person name="Lee D.G."/>
            <person name="Urbach J.M."/>
            <person name="Wu G."/>
            <person name="Liberati N.T."/>
            <person name="Feinbaum R.L."/>
            <person name="Miyata S."/>
            <person name="Diggins L.T."/>
            <person name="He J."/>
            <person name="Saucier M."/>
            <person name="Deziel E."/>
            <person name="Friedman L."/>
            <person name="Li L."/>
            <person name="Grills G."/>
            <person name="Montgomery K."/>
            <person name="Kucherlapati R."/>
            <person name="Rahme L.G."/>
            <person name="Ausubel F.M."/>
        </authorList>
    </citation>
    <scope>NUCLEOTIDE SEQUENCE [LARGE SCALE GENOMIC DNA]</scope>
    <source>
        <strain>UCBPP-PA14</strain>
    </source>
</reference>
<gene>
    <name evidence="1" type="primary">cyoE2</name>
    <name type="ordered locus">PA14_47150</name>
</gene>
<proteinExistence type="inferred from homology"/>
<feature type="chain" id="PRO_0000326920" description="Protoheme IX farnesyltransferase 2">
    <location>
        <begin position="1"/>
        <end position="296"/>
    </location>
</feature>
<feature type="transmembrane region" description="Helical" evidence="1">
    <location>
        <begin position="7"/>
        <end position="27"/>
    </location>
</feature>
<feature type="transmembrane region" description="Helical" evidence="1">
    <location>
        <begin position="36"/>
        <end position="56"/>
    </location>
</feature>
<feature type="transmembrane region" description="Helical" evidence="1">
    <location>
        <begin position="83"/>
        <end position="103"/>
    </location>
</feature>
<feature type="transmembrane region" description="Helical" evidence="1">
    <location>
        <begin position="108"/>
        <end position="128"/>
    </location>
</feature>
<feature type="transmembrane region" description="Helical" evidence="1">
    <location>
        <begin position="134"/>
        <end position="154"/>
    </location>
</feature>
<feature type="transmembrane region" description="Helical" evidence="1">
    <location>
        <begin position="163"/>
        <end position="183"/>
    </location>
</feature>
<feature type="transmembrane region" description="Helical" evidence="1">
    <location>
        <begin position="207"/>
        <end position="227"/>
    </location>
</feature>
<feature type="transmembrane region" description="Helical" evidence="1">
    <location>
        <begin position="229"/>
        <end position="249"/>
    </location>
</feature>
<feature type="transmembrane region" description="Helical" evidence="1">
    <location>
        <begin position="265"/>
        <end position="285"/>
    </location>
</feature>
<comment type="function">
    <text evidence="1">Converts heme B (protoheme IX) to heme O by substitution of the vinyl group on carbon 2 of heme B porphyrin ring with a hydroxyethyl farnesyl side group.</text>
</comment>
<comment type="catalytic activity">
    <reaction evidence="1">
        <text>heme b + (2E,6E)-farnesyl diphosphate + H2O = Fe(II)-heme o + diphosphate</text>
        <dbReference type="Rhea" id="RHEA:28070"/>
        <dbReference type="ChEBI" id="CHEBI:15377"/>
        <dbReference type="ChEBI" id="CHEBI:33019"/>
        <dbReference type="ChEBI" id="CHEBI:60344"/>
        <dbReference type="ChEBI" id="CHEBI:60530"/>
        <dbReference type="ChEBI" id="CHEBI:175763"/>
        <dbReference type="EC" id="2.5.1.141"/>
    </reaction>
</comment>
<comment type="pathway">
    <text evidence="1">Porphyrin-containing compound metabolism; heme O biosynthesis; heme O from protoheme: step 1/1.</text>
</comment>
<comment type="subcellular location">
    <subcellularLocation>
        <location evidence="1">Cell inner membrane</location>
        <topology evidence="1">Multi-pass membrane protein</topology>
    </subcellularLocation>
</comment>
<comment type="miscellaneous">
    <text evidence="1">Carbon 2 of the heme B porphyrin ring is defined according to the Fischer nomenclature.</text>
</comment>
<comment type="similarity">
    <text evidence="1">Belongs to the UbiA prenyltransferase family. Protoheme IX farnesyltransferase subfamily.</text>
</comment>
<name>CYOE2_PSEAB</name>
<sequence length="296" mass="31821">MKLKRYLLVAKPGIIFGNLIAVAGGYFLAARGSVEPMLLLATVIGLSLVVASGCVLNNCIDRDIDRHMERTRGRVTVTGQISLKAALAHGLVLGVAGFGLLWWRTNPLTTALAGFGYFVYVGLYSLWFKRRSQYGTLVGSLSGAMPPVVGYCAVSGQFDAGAASLLAIFCLWQMPHSYAIAIFRLKDYEAAGIPVLPVARGIAVTKIHIVLYILAFMAATLALCLGGYAGYGYLLVAVAVSLWWLAIALTGYWTADDRVWARKLFAFSIVAITALSVMMSIDFQVAPATHLVASLF</sequence>
<protein>
    <recommendedName>
        <fullName evidence="1">Protoheme IX farnesyltransferase 2</fullName>
        <ecNumber evidence="1">2.5.1.141</ecNumber>
    </recommendedName>
    <alternativeName>
        <fullName evidence="1">Heme B farnesyltransferase 2</fullName>
    </alternativeName>
    <alternativeName>
        <fullName evidence="1">Heme O synthase 2</fullName>
    </alternativeName>
</protein>
<accession>Q02JG2</accession>
<evidence type="ECO:0000255" key="1">
    <source>
        <dbReference type="HAMAP-Rule" id="MF_00154"/>
    </source>
</evidence>
<organism>
    <name type="scientific">Pseudomonas aeruginosa (strain UCBPP-PA14)</name>
    <dbReference type="NCBI Taxonomy" id="208963"/>
    <lineage>
        <taxon>Bacteria</taxon>
        <taxon>Pseudomonadati</taxon>
        <taxon>Pseudomonadota</taxon>
        <taxon>Gammaproteobacteria</taxon>
        <taxon>Pseudomonadales</taxon>
        <taxon>Pseudomonadaceae</taxon>
        <taxon>Pseudomonas</taxon>
    </lineage>
</organism>
<keyword id="KW-0997">Cell inner membrane</keyword>
<keyword id="KW-1003">Cell membrane</keyword>
<keyword id="KW-0350">Heme biosynthesis</keyword>
<keyword id="KW-0472">Membrane</keyword>
<keyword id="KW-0808">Transferase</keyword>
<keyword id="KW-0812">Transmembrane</keyword>
<keyword id="KW-1133">Transmembrane helix</keyword>